<protein>
    <recommendedName>
        <fullName evidence="1">ATP synthase subunit a</fullName>
    </recommendedName>
    <alternativeName>
        <fullName evidence="1">ATP synthase F0 sector subunit a</fullName>
    </alternativeName>
    <alternativeName>
        <fullName evidence="1">F-ATPase subunit 6</fullName>
    </alternativeName>
</protein>
<accession>Q318T6</accession>
<organism>
    <name type="scientific">Prochlorococcus marinus (strain MIT 9312)</name>
    <dbReference type="NCBI Taxonomy" id="74546"/>
    <lineage>
        <taxon>Bacteria</taxon>
        <taxon>Bacillati</taxon>
        <taxon>Cyanobacteriota</taxon>
        <taxon>Cyanophyceae</taxon>
        <taxon>Synechococcales</taxon>
        <taxon>Prochlorococcaceae</taxon>
        <taxon>Prochlorococcus</taxon>
    </lineage>
</organism>
<name>ATP6_PROM9</name>
<evidence type="ECO:0000255" key="1">
    <source>
        <dbReference type="HAMAP-Rule" id="MF_01393"/>
    </source>
</evidence>
<comment type="function">
    <text evidence="1">Key component of the proton channel; it plays a direct role in the translocation of protons across the membrane.</text>
</comment>
<comment type="subunit">
    <text evidence="1">F-type ATPases have 2 components, CF(1) - the catalytic core - and CF(0) - the membrane proton channel. CF(1) has five subunits: alpha(3), beta(3), gamma(1), delta(1), epsilon(1). CF(0) has four main subunits: a, b, b' and c.</text>
</comment>
<comment type="subcellular location">
    <subcellularLocation>
        <location evidence="1">Cellular thylakoid membrane</location>
        <topology evidence="1">Multi-pass membrane protein</topology>
    </subcellularLocation>
</comment>
<comment type="similarity">
    <text evidence="1">Belongs to the ATPase A chain family.</text>
</comment>
<keyword id="KW-0066">ATP synthesis</keyword>
<keyword id="KW-0138">CF(0)</keyword>
<keyword id="KW-0375">Hydrogen ion transport</keyword>
<keyword id="KW-0406">Ion transport</keyword>
<keyword id="KW-0472">Membrane</keyword>
<keyword id="KW-0793">Thylakoid</keyword>
<keyword id="KW-0812">Transmembrane</keyword>
<keyword id="KW-1133">Transmembrane helix</keyword>
<keyword id="KW-0813">Transport</keyword>
<reference key="1">
    <citation type="journal article" date="2006" name="Science">
        <title>Genomic islands and the ecology and evolution of Prochlorococcus.</title>
        <authorList>
            <person name="Coleman M.L."/>
            <person name="Sullivan M.B."/>
            <person name="Martiny A.C."/>
            <person name="Steglich C."/>
            <person name="Barry K."/>
            <person name="Delong E.F."/>
            <person name="Chisholm S.W."/>
        </authorList>
    </citation>
    <scope>NUCLEOTIDE SEQUENCE [LARGE SCALE GENOMIC DNA]</scope>
    <source>
        <strain>MIT 9312</strain>
    </source>
</reference>
<feature type="chain" id="PRO_0000362380" description="ATP synthase subunit a">
    <location>
        <begin position="1"/>
        <end position="241"/>
    </location>
</feature>
<feature type="transmembrane region" description="Helical" evidence="1">
    <location>
        <begin position="30"/>
        <end position="50"/>
    </location>
</feature>
<feature type="transmembrane region" description="Helical" evidence="1">
    <location>
        <begin position="91"/>
        <end position="111"/>
    </location>
</feature>
<feature type="transmembrane region" description="Helical" evidence="1">
    <location>
        <begin position="128"/>
        <end position="148"/>
    </location>
</feature>
<feature type="transmembrane region" description="Helical" evidence="1">
    <location>
        <begin position="193"/>
        <end position="213"/>
    </location>
</feature>
<feature type="transmembrane region" description="Helical" evidence="1">
    <location>
        <begin position="214"/>
        <end position="234"/>
    </location>
</feature>
<dbReference type="EMBL" id="CP000111">
    <property type="protein sequence ID" value="ABB50609.1"/>
    <property type="molecule type" value="Genomic_DNA"/>
</dbReference>
<dbReference type="RefSeq" id="WP_011377091.1">
    <property type="nucleotide sequence ID" value="NC_007577.1"/>
</dbReference>
<dbReference type="SMR" id="Q318T6"/>
<dbReference type="STRING" id="74546.PMT9312_1549"/>
<dbReference type="KEGG" id="pmi:PMT9312_1549"/>
<dbReference type="eggNOG" id="COG0356">
    <property type="taxonomic scope" value="Bacteria"/>
</dbReference>
<dbReference type="HOGENOM" id="CLU_041018_2_4_3"/>
<dbReference type="OrthoDB" id="9789241at2"/>
<dbReference type="Proteomes" id="UP000002715">
    <property type="component" value="Chromosome"/>
</dbReference>
<dbReference type="GO" id="GO:0031676">
    <property type="term" value="C:plasma membrane-derived thylakoid membrane"/>
    <property type="evidence" value="ECO:0007669"/>
    <property type="project" value="UniProtKB-SubCell"/>
</dbReference>
<dbReference type="GO" id="GO:0045259">
    <property type="term" value="C:proton-transporting ATP synthase complex"/>
    <property type="evidence" value="ECO:0007669"/>
    <property type="project" value="UniProtKB-KW"/>
</dbReference>
<dbReference type="GO" id="GO:0046933">
    <property type="term" value="F:proton-transporting ATP synthase activity, rotational mechanism"/>
    <property type="evidence" value="ECO:0007669"/>
    <property type="project" value="UniProtKB-UniRule"/>
</dbReference>
<dbReference type="CDD" id="cd00310">
    <property type="entry name" value="ATP-synt_Fo_a_6"/>
    <property type="match status" value="1"/>
</dbReference>
<dbReference type="FunFam" id="1.20.120.220:FF:000001">
    <property type="entry name" value="ATP synthase subunit a, chloroplastic"/>
    <property type="match status" value="1"/>
</dbReference>
<dbReference type="Gene3D" id="1.20.120.220">
    <property type="entry name" value="ATP synthase, F0 complex, subunit A"/>
    <property type="match status" value="1"/>
</dbReference>
<dbReference type="HAMAP" id="MF_01393">
    <property type="entry name" value="ATP_synth_a_bact"/>
    <property type="match status" value="1"/>
</dbReference>
<dbReference type="InterPro" id="IPR045082">
    <property type="entry name" value="ATP_syn_F0_a_bact/chloroplast"/>
</dbReference>
<dbReference type="InterPro" id="IPR000568">
    <property type="entry name" value="ATP_synth_F0_asu"/>
</dbReference>
<dbReference type="InterPro" id="IPR023011">
    <property type="entry name" value="ATP_synth_F0_asu_AS"/>
</dbReference>
<dbReference type="InterPro" id="IPR035908">
    <property type="entry name" value="F0_ATP_A_sf"/>
</dbReference>
<dbReference type="NCBIfam" id="TIGR01131">
    <property type="entry name" value="ATP_synt_6_or_A"/>
    <property type="match status" value="1"/>
</dbReference>
<dbReference type="PANTHER" id="PTHR42823">
    <property type="entry name" value="ATP SYNTHASE SUBUNIT A, CHLOROPLASTIC"/>
    <property type="match status" value="1"/>
</dbReference>
<dbReference type="PANTHER" id="PTHR42823:SF3">
    <property type="entry name" value="ATP SYNTHASE SUBUNIT A, CHLOROPLASTIC"/>
    <property type="match status" value="1"/>
</dbReference>
<dbReference type="Pfam" id="PF00119">
    <property type="entry name" value="ATP-synt_A"/>
    <property type="match status" value="1"/>
</dbReference>
<dbReference type="PRINTS" id="PR00123">
    <property type="entry name" value="ATPASEA"/>
</dbReference>
<dbReference type="SUPFAM" id="SSF81336">
    <property type="entry name" value="F1F0 ATP synthase subunit A"/>
    <property type="match status" value="1"/>
</dbReference>
<dbReference type="PROSITE" id="PS00449">
    <property type="entry name" value="ATPASE_A"/>
    <property type="match status" value="1"/>
</dbReference>
<proteinExistence type="inferred from homology"/>
<sequence length="241" mass="27306">MLFNSLLTNFAALEVGQHLYWQIGNIRLHGQVFLTSWILLGALLVFISLGTKKMENDPKGLQNLLEFLWDYIRDLARTQIGEKVYRDWMPFIGTLFLFVFVSNWGGALIPWRLIKLPSGELGAPTADINTTIALALLVSLSYFYAGLSNKGWRYFEYYVHPTPIMLPFKILEDFTKPLSLSFRLFGNILADELVVGVLVFLVPLILPIPVMFLGLFTSAIQALIFATLAAYYIGEAVEEHH</sequence>
<gene>
    <name evidence="1" type="primary">atpB</name>
    <name evidence="1" type="synonym">atpI</name>
    <name type="ordered locus">PMT9312_1549</name>
</gene>